<proteinExistence type="evidence at protein level"/>
<protein>
    <recommendedName>
        <fullName evidence="11">12-oxophytodienoate reductase 1</fullName>
        <ecNumber evidence="4 10">1.3.1.42</ecNumber>
    </recommendedName>
    <alternativeName>
        <fullName evidence="11">12-oxophytodienoate-10,11-reductase 1</fullName>
        <shortName evidence="11">AtOPR1</shortName>
        <shortName evidence="12">OPDA-reductase 1</shortName>
    </alternativeName>
    <alternativeName>
        <fullName evidence="12">FS-AT-I</fullName>
    </alternativeName>
</protein>
<organism>
    <name type="scientific">Arabidopsis thaliana</name>
    <name type="common">Mouse-ear cress</name>
    <dbReference type="NCBI Taxonomy" id="3702"/>
    <lineage>
        <taxon>Eukaryota</taxon>
        <taxon>Viridiplantae</taxon>
        <taxon>Streptophyta</taxon>
        <taxon>Embryophyta</taxon>
        <taxon>Tracheophyta</taxon>
        <taxon>Spermatophyta</taxon>
        <taxon>Magnoliopsida</taxon>
        <taxon>eudicotyledons</taxon>
        <taxon>Gunneridae</taxon>
        <taxon>Pentapetalae</taxon>
        <taxon>rosids</taxon>
        <taxon>malvids</taxon>
        <taxon>Brassicales</taxon>
        <taxon>Brassicaceae</taxon>
        <taxon>Camelineae</taxon>
        <taxon>Arabidopsis</taxon>
    </lineage>
</organism>
<name>OPR1_ARATH</name>
<dbReference type="EC" id="1.3.1.42" evidence="4 10"/>
<dbReference type="EMBL" id="Y10617">
    <property type="protein sequence ID" value="CAA71627.1"/>
    <property type="molecule type" value="mRNA"/>
</dbReference>
<dbReference type="EMBL" id="U92460">
    <property type="protein sequence ID" value="AAC78440.1"/>
    <property type="molecule type" value="Genomic_DNA"/>
</dbReference>
<dbReference type="EMBL" id="AC010718">
    <property type="protein sequence ID" value="AAF04448.1"/>
    <property type="molecule type" value="Genomic_DNA"/>
</dbReference>
<dbReference type="EMBL" id="CP002684">
    <property type="protein sequence ID" value="AEE35875.1"/>
    <property type="molecule type" value="Genomic_DNA"/>
</dbReference>
<dbReference type="EMBL" id="AY074874">
    <property type="protein sequence ID" value="AAL75894.1"/>
    <property type="molecule type" value="mRNA"/>
</dbReference>
<dbReference type="EMBL" id="BT020365">
    <property type="protein sequence ID" value="AAV85720.1"/>
    <property type="molecule type" value="mRNA"/>
</dbReference>
<dbReference type="EMBL" id="AY087801">
    <property type="protein sequence ID" value="AAM65337.1"/>
    <property type="molecule type" value="mRNA"/>
</dbReference>
<dbReference type="PIR" id="B96795">
    <property type="entry name" value="B96795"/>
</dbReference>
<dbReference type="RefSeq" id="NP_177794.1">
    <molecule id="Q8LAH7-1"/>
    <property type="nucleotide sequence ID" value="NM_106318.4"/>
</dbReference>
<dbReference type="PDB" id="1VJI">
    <property type="method" value="X-ray"/>
    <property type="resolution" value="2.00 A"/>
    <property type="chains" value="A=1-372"/>
</dbReference>
<dbReference type="PDB" id="2Q3R">
    <property type="method" value="X-ray"/>
    <property type="resolution" value="2.00 A"/>
    <property type="chains" value="A=1-372"/>
</dbReference>
<dbReference type="PDBsum" id="1VJI"/>
<dbReference type="PDBsum" id="2Q3R"/>
<dbReference type="SMR" id="Q8LAH7"/>
<dbReference type="BioGRID" id="29220">
    <property type="interactions" value="1"/>
</dbReference>
<dbReference type="FunCoup" id="Q8LAH7">
    <property type="interactions" value="289"/>
</dbReference>
<dbReference type="IntAct" id="Q8LAH7">
    <property type="interactions" value="2"/>
</dbReference>
<dbReference type="STRING" id="3702.Q8LAH7"/>
<dbReference type="PaxDb" id="3702-AT1G76680.2"/>
<dbReference type="ProteomicsDB" id="249368">
    <molecule id="Q8LAH7-1"/>
</dbReference>
<dbReference type="EnsemblPlants" id="AT1G76680.1">
    <molecule id="Q8LAH7-1"/>
    <property type="protein sequence ID" value="AT1G76680.1"/>
    <property type="gene ID" value="AT1G76680"/>
</dbReference>
<dbReference type="GeneID" id="844001"/>
<dbReference type="Gramene" id="AT1G76680.1">
    <molecule id="Q8LAH7-1"/>
    <property type="protein sequence ID" value="AT1G76680.1"/>
    <property type="gene ID" value="AT1G76680"/>
</dbReference>
<dbReference type="KEGG" id="ath:AT1G76680"/>
<dbReference type="Araport" id="AT1G76680"/>
<dbReference type="TAIR" id="AT1G76680">
    <property type="gene designation" value="OPR1"/>
</dbReference>
<dbReference type="eggNOG" id="KOG0134">
    <property type="taxonomic scope" value="Eukaryota"/>
</dbReference>
<dbReference type="HOGENOM" id="CLU_012153_0_0_1"/>
<dbReference type="InParanoid" id="Q8LAH7"/>
<dbReference type="OrthoDB" id="1663137at2759"/>
<dbReference type="PhylomeDB" id="Q8LAH7"/>
<dbReference type="BioCyc" id="ARA:AT1G76680-MONOMER"/>
<dbReference type="BRENDA" id="1.3.1.42">
    <property type="organism ID" value="399"/>
</dbReference>
<dbReference type="UniPathway" id="UPA00382"/>
<dbReference type="EvolutionaryTrace" id="Q8LAH7"/>
<dbReference type="PRO" id="PR:Q8LAH7"/>
<dbReference type="Proteomes" id="UP000006548">
    <property type="component" value="Chromosome 1"/>
</dbReference>
<dbReference type="ExpressionAtlas" id="Q8LAH7">
    <property type="expression patterns" value="baseline and differential"/>
</dbReference>
<dbReference type="GO" id="GO:0005737">
    <property type="term" value="C:cytoplasm"/>
    <property type="evidence" value="ECO:0000314"/>
    <property type="project" value="UniProtKB"/>
</dbReference>
<dbReference type="GO" id="GO:0016629">
    <property type="term" value="F:12-oxophytodienoate reductase activity"/>
    <property type="evidence" value="ECO:0000314"/>
    <property type="project" value="UniProtKB"/>
</dbReference>
<dbReference type="GO" id="GO:0010181">
    <property type="term" value="F:FMN binding"/>
    <property type="evidence" value="ECO:0000314"/>
    <property type="project" value="UniProtKB"/>
</dbReference>
<dbReference type="GO" id="GO:0006633">
    <property type="term" value="P:fatty acid biosynthetic process"/>
    <property type="evidence" value="ECO:0007669"/>
    <property type="project" value="UniProtKB-KW"/>
</dbReference>
<dbReference type="GO" id="GO:0031408">
    <property type="term" value="P:oxylipin biosynthetic process"/>
    <property type="evidence" value="ECO:0007669"/>
    <property type="project" value="UniProtKB-UniPathway"/>
</dbReference>
<dbReference type="CDD" id="cd02933">
    <property type="entry name" value="OYE_like_FMN"/>
    <property type="match status" value="1"/>
</dbReference>
<dbReference type="FunFam" id="3.20.20.70:FF:000073">
    <property type="entry name" value="12-oxophytodienoate reductase 3"/>
    <property type="match status" value="1"/>
</dbReference>
<dbReference type="Gene3D" id="3.20.20.70">
    <property type="entry name" value="Aldolase class I"/>
    <property type="match status" value="1"/>
</dbReference>
<dbReference type="InterPro" id="IPR013785">
    <property type="entry name" value="Aldolase_TIM"/>
</dbReference>
<dbReference type="InterPro" id="IPR001155">
    <property type="entry name" value="OxRdtase_FMN_N"/>
</dbReference>
<dbReference type="InterPro" id="IPR045247">
    <property type="entry name" value="Oye-like"/>
</dbReference>
<dbReference type="PANTHER" id="PTHR22893">
    <property type="entry name" value="NADH OXIDOREDUCTASE-RELATED"/>
    <property type="match status" value="1"/>
</dbReference>
<dbReference type="PANTHER" id="PTHR22893:SF91">
    <property type="entry name" value="NADPH DEHYDROGENASE 2-RELATED"/>
    <property type="match status" value="1"/>
</dbReference>
<dbReference type="Pfam" id="PF00724">
    <property type="entry name" value="Oxidored_FMN"/>
    <property type="match status" value="1"/>
</dbReference>
<dbReference type="SUPFAM" id="SSF51395">
    <property type="entry name" value="FMN-linked oxidoreductases"/>
    <property type="match status" value="1"/>
</dbReference>
<comment type="function">
    <text evidence="4 9 10 13">Specifically cleaves olefinic bonds in alpha,beta-unsaturated carbonyls and may be involved in detoxification or modification of these reactive compounds (PubMed:10872231, PubMed:9346960). May be involved in the biosynthesis or metabolism of oxylipin signaling molecules (Probable). In vitro, reduces 9R,13R-12-oxophytodienoic acid (9R,13R-OPDA) to 9R,13R-OPC-8:0, but only poorly 9S,13S-OPDA, the natural precursor of jasmonic acid (PubMed:10872231). Can detoxify the explosive 2,4,6-trinitrotoluene (TNT) in vitro and in vivo by catalyzing its nitroreduction to form hydroxylamino-dinitrotoluene (HADNT) (PubMed:19605548).</text>
</comment>
<comment type="catalytic activity">
    <reaction evidence="4 10">
        <text>(1S,2S)-OPC-8 + NADP(+) = (9S,13S,15Z)-12-oxophyto-10,15-dienoate + NADPH + H(+)</text>
        <dbReference type="Rhea" id="RHEA:21888"/>
        <dbReference type="ChEBI" id="CHEBI:15378"/>
        <dbReference type="ChEBI" id="CHEBI:57411"/>
        <dbReference type="ChEBI" id="CHEBI:57783"/>
        <dbReference type="ChEBI" id="CHEBI:58349"/>
        <dbReference type="ChEBI" id="CHEBI:191855"/>
        <dbReference type="EC" id="1.3.1.42"/>
    </reaction>
</comment>
<comment type="cofactor">
    <cofactor evidence="4">
        <name>FMN</name>
        <dbReference type="ChEBI" id="CHEBI:58210"/>
    </cofactor>
</comment>
<comment type="pathway">
    <text evidence="12">Lipid metabolism; oxylipin biosynthesis.</text>
</comment>
<comment type="interaction">
    <interactant intactId="EBI-2926709">
        <id>Q8LAH7</id>
    </interactant>
    <interactant intactId="EBI-25521837">
        <id>A0A384KC16</id>
        <label>AXX17_At3g57540</label>
    </interactant>
    <organismsDiffer>false</organismsDiffer>
    <experiments>3</experiments>
</comment>
<comment type="subcellular location">
    <subcellularLocation>
        <location evidence="6">Cytoplasm</location>
    </subcellularLocation>
</comment>
<comment type="alternative products">
    <event type="alternative splicing"/>
    <isoform>
        <id>Q8LAH7-1</id>
        <name>1</name>
        <sequence type="displayed"/>
    </isoform>
    <text evidence="12">A number of isoforms are produced. According to EST sequences.</text>
</comment>
<comment type="tissue specificity">
    <text evidence="3">Mostly expressed in roots, also present in leaves, shoots and flowers. More abundant in cotyledons. In more details, expressed in peduncles, sepals, petals, around the abscission zone of siliques, maturing siliques and developing seeds.</text>
</comment>
<comment type="developmental stage">
    <text>Expressed during leaves senescence, seeds development, and siliques maturation.</text>
</comment>
<comment type="induction">
    <text evidence="3 5 9">By wounding, locally and systemically, by cold and heat stresses, by jasmonate and by UV-C. Up-regulated during senescence. Seems to not be influenced by UV-A and UV-B. Induced by the explosive 2,4,6-trinitrotoluene (TNT).</text>
</comment>
<comment type="similarity">
    <text evidence="12">Belongs to the NADH:flavin oxidoreductase/NADH oxidase family.</text>
</comment>
<accession>Q8LAH7</accession>
<accession>O49259</accession>
<accession>Q9S806</accession>
<feature type="chain" id="PRO_0000194483" description="12-oxophytodienoate reductase 1">
    <location>
        <begin position="1"/>
        <end position="372"/>
    </location>
</feature>
<feature type="active site" description="Proton donor" evidence="2">
    <location>
        <position position="188"/>
    </location>
</feature>
<feature type="binding site" evidence="7 8 16 17">
    <location>
        <begin position="31"/>
        <end position="33"/>
    </location>
    <ligand>
        <name>FMN</name>
        <dbReference type="ChEBI" id="CHEBI:58210"/>
    </ligand>
</feature>
<feature type="binding site" evidence="7 8 16 17">
    <location>
        <position position="64"/>
    </location>
    <ligand>
        <name>FMN</name>
        <dbReference type="ChEBI" id="CHEBI:58210"/>
    </ligand>
</feature>
<feature type="binding site" evidence="7 8 16 17">
    <location>
        <position position="106"/>
    </location>
    <ligand>
        <name>FMN</name>
        <dbReference type="ChEBI" id="CHEBI:58210"/>
    </ligand>
</feature>
<feature type="binding site" evidence="2">
    <location>
        <position position="183"/>
    </location>
    <ligand>
        <name>substrate</name>
    </ligand>
</feature>
<feature type="binding site" evidence="7 8 16 17">
    <location>
        <position position="235"/>
    </location>
    <ligand>
        <name>FMN</name>
        <dbReference type="ChEBI" id="CHEBI:58210"/>
    </ligand>
</feature>
<feature type="binding site" evidence="2">
    <location>
        <position position="275"/>
    </location>
    <ligand>
        <name>substrate</name>
    </ligand>
</feature>
<feature type="binding site" evidence="7 8 16 17">
    <location>
        <begin position="303"/>
        <end position="305"/>
    </location>
    <ligand>
        <name>FMN</name>
        <dbReference type="ChEBI" id="CHEBI:58210"/>
    </ligand>
</feature>
<feature type="binding site" evidence="2">
    <location>
        <begin position="326"/>
        <end position="327"/>
    </location>
    <ligand>
        <name>FMN</name>
        <dbReference type="ChEBI" id="CHEBI:58210"/>
    </ligand>
</feature>
<feature type="modified residue" description="N-acetylmethionine" evidence="1">
    <location>
        <position position="1"/>
    </location>
</feature>
<feature type="sequence conflict" description="In Ref. 1; CAA71627." evidence="12" ref="1">
    <location>
        <begin position="43"/>
        <end position="44"/>
    </location>
</feature>
<feature type="sequence conflict" description="In Ref. 7; AAM65337." evidence="12" ref="7">
    <original>G</original>
    <variation>R</variation>
    <location>
        <position position="184"/>
    </location>
</feature>
<feature type="helix" evidence="18">
    <location>
        <begin position="11"/>
        <end position="13"/>
    </location>
</feature>
<feature type="strand" evidence="18">
    <location>
        <begin position="16"/>
        <end position="18"/>
    </location>
</feature>
<feature type="strand" evidence="18">
    <location>
        <begin position="21"/>
        <end position="24"/>
    </location>
</feature>
<feature type="strand" evidence="18">
    <location>
        <begin position="26"/>
        <end position="29"/>
    </location>
</feature>
<feature type="helix" evidence="18">
    <location>
        <begin position="38"/>
        <end position="40"/>
    </location>
</feature>
<feature type="helix" evidence="18">
    <location>
        <begin position="44"/>
        <end position="52"/>
    </location>
</feature>
<feature type="strand" evidence="18">
    <location>
        <begin position="59"/>
        <end position="61"/>
    </location>
</feature>
<feature type="strand" evidence="18">
    <location>
        <begin position="65"/>
        <end position="68"/>
    </location>
</feature>
<feature type="strand" evidence="18">
    <location>
        <begin position="73"/>
        <end position="76"/>
    </location>
</feature>
<feature type="helix" evidence="18">
    <location>
        <begin position="83"/>
        <end position="97"/>
    </location>
</feature>
<feature type="turn" evidence="18">
    <location>
        <begin position="98"/>
        <end position="100"/>
    </location>
</feature>
<feature type="strand" evidence="18">
    <location>
        <begin position="102"/>
        <end position="108"/>
    </location>
</feature>
<feature type="turn" evidence="18">
    <location>
        <begin position="116"/>
        <end position="118"/>
    </location>
</feature>
<feature type="helix" evidence="18">
    <location>
        <begin position="120"/>
        <end position="122"/>
    </location>
</feature>
<feature type="strand" evidence="18">
    <location>
        <begin position="126"/>
        <end position="129"/>
    </location>
</feature>
<feature type="strand" evidence="18">
    <location>
        <begin position="140"/>
        <end position="142"/>
    </location>
</feature>
<feature type="strand" evidence="18">
    <location>
        <begin position="145"/>
        <end position="147"/>
    </location>
</feature>
<feature type="turn" evidence="18">
    <location>
        <begin position="155"/>
        <end position="157"/>
    </location>
</feature>
<feature type="helix" evidence="18">
    <location>
        <begin position="158"/>
        <end position="175"/>
    </location>
</feature>
<feature type="strand" evidence="18">
    <location>
        <begin position="178"/>
        <end position="184"/>
    </location>
</feature>
<feature type="helix" evidence="18">
    <location>
        <begin position="189"/>
        <end position="194"/>
    </location>
</feature>
<feature type="turn" evidence="18">
    <location>
        <begin position="196"/>
        <end position="198"/>
    </location>
</feature>
<feature type="strand" evidence="18">
    <location>
        <begin position="206"/>
        <end position="208"/>
    </location>
</feature>
<feature type="helix" evidence="18">
    <location>
        <begin position="209"/>
        <end position="227"/>
    </location>
</feature>
<feature type="helix" evidence="18">
    <location>
        <begin position="229"/>
        <end position="231"/>
    </location>
</feature>
<feature type="strand" evidence="18">
    <location>
        <begin position="232"/>
        <end position="236"/>
    </location>
</feature>
<feature type="turn" evidence="18">
    <location>
        <begin position="242"/>
        <end position="244"/>
    </location>
</feature>
<feature type="helix" evidence="18">
    <location>
        <begin position="250"/>
        <end position="264"/>
    </location>
</feature>
<feature type="strand" evidence="18">
    <location>
        <begin position="267"/>
        <end position="272"/>
    </location>
</feature>
<feature type="helix" evidence="18">
    <location>
        <begin position="290"/>
        <end position="295"/>
    </location>
</feature>
<feature type="strand" evidence="18">
    <location>
        <begin position="297"/>
        <end position="305"/>
    </location>
</feature>
<feature type="helix" evidence="18">
    <location>
        <begin position="309"/>
        <end position="316"/>
    </location>
</feature>
<feature type="strand" evidence="18">
    <location>
        <begin position="321"/>
        <end position="326"/>
    </location>
</feature>
<feature type="helix" evidence="18">
    <location>
        <begin position="327"/>
        <end position="330"/>
    </location>
</feature>
<feature type="helix" evidence="18">
    <location>
        <begin position="335"/>
        <end position="338"/>
    </location>
</feature>
<feature type="helix" evidence="18">
    <location>
        <begin position="350"/>
        <end position="353"/>
    </location>
</feature>
<feature type="turn" evidence="18">
    <location>
        <begin position="360"/>
        <end position="362"/>
    </location>
</feature>
<reference key="1">
    <citation type="journal article" date="1997" name="J. Biol. Chem.">
        <title>Molecular cloning and characterization of 12-oxophytodienoate reductase, an enzyme of the octadecanoid signaling pathway from Arabidopsis thaliana. Structural and functional relationship to yeast old yellow enzyme.</title>
        <authorList>
            <person name="Schaller F."/>
            <person name="Weiler E.W."/>
        </authorList>
    </citation>
    <scope>NUCLEOTIDE SEQUENCE [MRNA]</scope>
    <scope>FUNCTION</scope>
    <scope>CATALYTIC ACTIVITY</scope>
    <source>
        <strain>cv. Columbia</strain>
    </source>
</reference>
<reference key="2">
    <citation type="journal article" date="1999" name="Planta">
        <title>Structure and regulation of OPR1 and OPR2, two closely related genes encoding 12-oxophytodienoic acid-10,11-reductases from Arabidopsis thaliana.</title>
        <authorList>
            <person name="Biesgen C."/>
            <person name="Weiler E.W."/>
        </authorList>
    </citation>
    <scope>NUCLEOTIDE SEQUENCE [GENOMIC DNA]</scope>
    <scope>TISSUE SPECIFICITY</scope>
    <scope>INDUCTION</scope>
    <source>
        <strain>cv. Columbia</strain>
    </source>
</reference>
<reference key="3">
    <citation type="journal article" date="2000" name="Nature">
        <title>Sequence and analysis of chromosome 1 of the plant Arabidopsis thaliana.</title>
        <authorList>
            <person name="Theologis A."/>
            <person name="Ecker J.R."/>
            <person name="Palm C.J."/>
            <person name="Federspiel N.A."/>
            <person name="Kaul S."/>
            <person name="White O."/>
            <person name="Alonso J."/>
            <person name="Altafi H."/>
            <person name="Araujo R."/>
            <person name="Bowman C.L."/>
            <person name="Brooks S.Y."/>
            <person name="Buehler E."/>
            <person name="Chan A."/>
            <person name="Chao Q."/>
            <person name="Chen H."/>
            <person name="Cheuk R.F."/>
            <person name="Chin C.W."/>
            <person name="Chung M.K."/>
            <person name="Conn L."/>
            <person name="Conway A.B."/>
            <person name="Conway A.R."/>
            <person name="Creasy T.H."/>
            <person name="Dewar K."/>
            <person name="Dunn P."/>
            <person name="Etgu P."/>
            <person name="Feldblyum T.V."/>
            <person name="Feng J.-D."/>
            <person name="Fong B."/>
            <person name="Fujii C.Y."/>
            <person name="Gill J.E."/>
            <person name="Goldsmith A.D."/>
            <person name="Haas B."/>
            <person name="Hansen N.F."/>
            <person name="Hughes B."/>
            <person name="Huizar L."/>
            <person name="Hunter J.L."/>
            <person name="Jenkins J."/>
            <person name="Johnson-Hopson C."/>
            <person name="Khan S."/>
            <person name="Khaykin E."/>
            <person name="Kim C.J."/>
            <person name="Koo H.L."/>
            <person name="Kremenetskaia I."/>
            <person name="Kurtz D.B."/>
            <person name="Kwan A."/>
            <person name="Lam B."/>
            <person name="Langin-Hooper S."/>
            <person name="Lee A."/>
            <person name="Lee J.M."/>
            <person name="Lenz C.A."/>
            <person name="Li J.H."/>
            <person name="Li Y.-P."/>
            <person name="Lin X."/>
            <person name="Liu S.X."/>
            <person name="Liu Z.A."/>
            <person name="Luros J.S."/>
            <person name="Maiti R."/>
            <person name="Marziali A."/>
            <person name="Militscher J."/>
            <person name="Miranda M."/>
            <person name="Nguyen M."/>
            <person name="Nierman W.C."/>
            <person name="Osborne B.I."/>
            <person name="Pai G."/>
            <person name="Peterson J."/>
            <person name="Pham P.K."/>
            <person name="Rizzo M."/>
            <person name="Rooney T."/>
            <person name="Rowley D."/>
            <person name="Sakano H."/>
            <person name="Salzberg S.L."/>
            <person name="Schwartz J.R."/>
            <person name="Shinn P."/>
            <person name="Southwick A.M."/>
            <person name="Sun H."/>
            <person name="Tallon L.J."/>
            <person name="Tambunga G."/>
            <person name="Toriumi M.J."/>
            <person name="Town C.D."/>
            <person name="Utterback T."/>
            <person name="Van Aken S."/>
            <person name="Vaysberg M."/>
            <person name="Vysotskaia V.S."/>
            <person name="Walker M."/>
            <person name="Wu D."/>
            <person name="Yu G."/>
            <person name="Fraser C.M."/>
            <person name="Venter J.C."/>
            <person name="Davis R.W."/>
        </authorList>
    </citation>
    <scope>NUCLEOTIDE SEQUENCE [LARGE SCALE GENOMIC DNA]</scope>
    <source>
        <strain>cv. Columbia</strain>
    </source>
</reference>
<reference key="4">
    <citation type="journal article" date="2017" name="Plant J.">
        <title>Araport11: a complete reannotation of the Arabidopsis thaliana reference genome.</title>
        <authorList>
            <person name="Cheng C.Y."/>
            <person name="Krishnakumar V."/>
            <person name="Chan A.P."/>
            <person name="Thibaud-Nissen F."/>
            <person name="Schobel S."/>
            <person name="Town C.D."/>
        </authorList>
    </citation>
    <scope>GENOME REANNOTATION</scope>
    <source>
        <strain>cv. Columbia</strain>
    </source>
</reference>
<reference key="5">
    <citation type="journal article" date="2003" name="Science">
        <title>Empirical analysis of transcriptional activity in the Arabidopsis genome.</title>
        <authorList>
            <person name="Yamada K."/>
            <person name="Lim J."/>
            <person name="Dale J.M."/>
            <person name="Chen H."/>
            <person name="Shinn P."/>
            <person name="Palm C.J."/>
            <person name="Southwick A.M."/>
            <person name="Wu H.C."/>
            <person name="Kim C.J."/>
            <person name="Nguyen M."/>
            <person name="Pham P.K."/>
            <person name="Cheuk R.F."/>
            <person name="Karlin-Newmann G."/>
            <person name="Liu S.X."/>
            <person name="Lam B."/>
            <person name="Sakano H."/>
            <person name="Wu T."/>
            <person name="Yu G."/>
            <person name="Miranda M."/>
            <person name="Quach H.L."/>
            <person name="Tripp M."/>
            <person name="Chang C.H."/>
            <person name="Lee J.M."/>
            <person name="Toriumi M.J."/>
            <person name="Chan M.M."/>
            <person name="Tang C.C."/>
            <person name="Onodera C.S."/>
            <person name="Deng J.M."/>
            <person name="Akiyama K."/>
            <person name="Ansari Y."/>
            <person name="Arakawa T."/>
            <person name="Banh J."/>
            <person name="Banno F."/>
            <person name="Bowser L."/>
            <person name="Brooks S.Y."/>
            <person name="Carninci P."/>
            <person name="Chao Q."/>
            <person name="Choy N."/>
            <person name="Enju A."/>
            <person name="Goldsmith A.D."/>
            <person name="Gurjal M."/>
            <person name="Hansen N.F."/>
            <person name="Hayashizaki Y."/>
            <person name="Johnson-Hopson C."/>
            <person name="Hsuan V.W."/>
            <person name="Iida K."/>
            <person name="Karnes M."/>
            <person name="Khan S."/>
            <person name="Koesema E."/>
            <person name="Ishida J."/>
            <person name="Jiang P.X."/>
            <person name="Jones T."/>
            <person name="Kawai J."/>
            <person name="Kamiya A."/>
            <person name="Meyers C."/>
            <person name="Nakajima M."/>
            <person name="Narusaka M."/>
            <person name="Seki M."/>
            <person name="Sakurai T."/>
            <person name="Satou M."/>
            <person name="Tamse R."/>
            <person name="Vaysberg M."/>
            <person name="Wallender E.K."/>
            <person name="Wong C."/>
            <person name="Yamamura Y."/>
            <person name="Yuan S."/>
            <person name="Shinozaki K."/>
            <person name="Davis R.W."/>
            <person name="Theologis A."/>
            <person name="Ecker J.R."/>
        </authorList>
    </citation>
    <scope>NUCLEOTIDE SEQUENCE [LARGE SCALE MRNA]</scope>
    <source>
        <strain>cv. Columbia</strain>
    </source>
</reference>
<reference key="6">
    <citation type="submission" date="2004-12" db="EMBL/GenBank/DDBJ databases">
        <title>Arabidopsis ORF clones.</title>
        <authorList>
            <person name="Kim C.J."/>
            <person name="Chen H."/>
            <person name="Cheuk R.F."/>
            <person name="Shinn P."/>
            <person name="Ecker J.R."/>
        </authorList>
    </citation>
    <scope>NUCLEOTIDE SEQUENCE [LARGE SCALE MRNA]</scope>
    <source>
        <strain>cv. Columbia</strain>
    </source>
</reference>
<reference key="7">
    <citation type="submission" date="2002-03" db="EMBL/GenBank/DDBJ databases">
        <title>Full-length cDNA from Arabidopsis thaliana.</title>
        <authorList>
            <person name="Brover V.V."/>
            <person name="Troukhan M.E."/>
            <person name="Alexandrov N.A."/>
            <person name="Lu Y.-P."/>
            <person name="Flavell R.B."/>
            <person name="Feldmann K.A."/>
        </authorList>
    </citation>
    <scope>NUCLEOTIDE SEQUENCE [LARGE SCALE MRNA]</scope>
</reference>
<reference key="8">
    <citation type="journal article" date="2000" name="Planta">
        <title>12-Oxophytodienoate reductase 3 (OPR3) is the isoenzyme involved in jasmonate biosynthesis.</title>
        <authorList>
            <person name="Schaller F."/>
            <person name="Biesgen C."/>
            <person name="Muessig C."/>
            <person name="Altmann T."/>
            <person name="Weiler E.W."/>
        </authorList>
    </citation>
    <scope>FUNCTION</scope>
    <scope>CATALYTIC ACTIVITY</scope>
    <scope>SUBSTRATE SPECIFICITY</scope>
    <scope>COFACTOR</scope>
</reference>
<reference key="9">
    <citation type="journal article" date="2001" name="Plant Mol. Biol.">
        <title>Identical promoter elements are involved in regulation of the OPR1 gene by senescence and jasmonic acid in Arabidopsis.</title>
        <authorList>
            <person name="He Y."/>
            <person name="Gan S."/>
        </authorList>
    </citation>
    <scope>INDUCTION</scope>
</reference>
<reference key="10">
    <citation type="journal article" date="2002" name="Plant J.">
        <title>Characterization and cDNA-microarray expression analysis of 12-oxophytodienoate reductases reveals differential roles for octadecanoid biosynthesis in the local versus the systemic wound response.</title>
        <authorList>
            <person name="Strassner J."/>
            <person name="Schaller F."/>
            <person name="Frick U.B."/>
            <person name="Howe G.A."/>
            <person name="Weiler E.W."/>
            <person name="Amrhein N."/>
            <person name="Macheroux P."/>
            <person name="Schaller A."/>
        </authorList>
    </citation>
    <scope>SUBCELLULAR LOCATION</scope>
</reference>
<reference key="11">
    <citation type="journal article" date="2009" name="Plant Physiol.">
        <title>The role of oxophytodienoate reductases in the detoxification of the explosive 2,4,6-trinitrotoluene by Arabidopsis.</title>
        <authorList>
            <person name="Beynon E.R."/>
            <person name="Symons Z.C."/>
            <person name="Jackson R.G."/>
            <person name="Lorenz A."/>
            <person name="Rylott E.L."/>
            <person name="Bruce N.C."/>
        </authorList>
    </citation>
    <scope>FUNCTION</scope>
    <scope>INDUCTION</scope>
</reference>
<reference key="12">
    <citation type="journal article" date="2005" name="Proteins">
        <title>X-ray structure of Arabidopsis At1g77680, 12-oxophytodienoate reductase isoform 1.</title>
        <authorList>
            <person name="Fox B.G."/>
            <person name="Malone T.E."/>
            <person name="Johnson K.A."/>
            <person name="Madson S.E."/>
            <person name="Aceti D."/>
            <person name="Bingman C.A."/>
            <person name="Blommel P.G."/>
            <person name="Buchan B."/>
            <person name="Burns B."/>
            <person name="Cao J."/>
            <person name="Cornilescu C."/>
            <person name="Doreleijers J."/>
            <person name="Ellefson J."/>
            <person name="Frederick R."/>
            <person name="Geetha H."/>
            <person name="Hruby D."/>
            <person name="Jeon W.B."/>
            <person name="Kimball T."/>
            <person name="Kunert J."/>
            <person name="Markley J.L."/>
            <person name="Newman C."/>
            <person name="Olson A."/>
            <person name="Peterson F.C."/>
            <person name="Phillips G.N. Jr."/>
            <person name="Primm J."/>
            <person name="Ramirez B."/>
            <person name="Rosenberg N.S."/>
            <person name="Runnels M."/>
            <person name="Seder K."/>
            <person name="Shaw J."/>
            <person name="Smith D.W."/>
            <person name="Sreenath H."/>
            <person name="Song J."/>
            <person name="Sussman M.R."/>
            <person name="Thao S."/>
            <person name="Troestler D."/>
            <person name="Tyler E."/>
            <person name="Tyler R."/>
            <person name="Ulrich E."/>
            <person name="Vinarov D."/>
            <person name="Vojtik F."/>
            <person name="Volkman B.F."/>
            <person name="Wesenberg G."/>
            <person name="Wrobel R.L."/>
            <person name="Zhang J."/>
            <person name="Zhao Q."/>
            <person name="Zolnai Z."/>
        </authorList>
    </citation>
    <scope>X-RAY CRYSTALLOGRAPHY (2.00 ANGSTROMS) IN COMPLEX WITH FMN</scope>
    <scope>COFACTOR</scope>
</reference>
<reference key="13">
    <citation type="journal article" date="2007" name="Structure">
        <title>Ensemble refinement of protein crystal structures: validation and application.</title>
        <authorList>
            <person name="Levin E.J."/>
            <person name="Kondrashov D.A."/>
            <person name="Wesenberg G.E."/>
            <person name="Phillips G.N. Jr."/>
        </authorList>
    </citation>
    <scope>X-RAY CRYSTALLOGRAPHY (2.00 ANGSTROMS) IN COMPLEX WITH FMN</scope>
</reference>
<sequence length="372" mass="41168">MENGEAKQSVPLLTPYKMGRFNLSHRVVLAPLTRQRSYGNVPQPHAAIYYSQRTTPGGFLITEATGVSDTAQGYQDTPGIWTKEHVEAWKPIVDAVHAKGGIFFCQIWHVGRVSNSGFQPNGKAPISCSDKPLMPQIRSNGIDEALFTPPRRLGIEEIPGIVNDFRLAARNAMEAGFDGVEIHGANGYLIDQFMKDTVNDRTDEYGGSLQNRCKFPLEIVDAVAKEIGPDRVGIRLSPFADYMESGDTNPGALGLYMAESLNKYGILYCHVIEARMKTMGEVHACPHTLMPMRKAFKGTFISAGGFTREDGNEAVSKGRTDLVAYGRWFLANPDLPKRFQVDAPLNKYDRPTFYTSDPVVGYTDYPFLESTA</sequence>
<gene>
    <name evidence="11" type="primary">OPR1</name>
    <name evidence="14" type="ordered locus">At1g76680</name>
    <name evidence="15" type="ORF">F28O16.5</name>
</gene>
<keyword id="KW-0002">3D-structure</keyword>
<keyword id="KW-0007">Acetylation</keyword>
<keyword id="KW-0025">Alternative splicing</keyword>
<keyword id="KW-0963">Cytoplasm</keyword>
<keyword id="KW-0275">Fatty acid biosynthesis</keyword>
<keyword id="KW-0276">Fatty acid metabolism</keyword>
<keyword id="KW-0285">Flavoprotein</keyword>
<keyword id="KW-0288">FMN</keyword>
<keyword id="KW-0444">Lipid biosynthesis</keyword>
<keyword id="KW-0443">Lipid metabolism</keyword>
<keyword id="KW-0521">NADP</keyword>
<keyword id="KW-0560">Oxidoreductase</keyword>
<keyword id="KW-0925">Oxylipin biosynthesis</keyword>
<keyword id="KW-1185">Reference proteome</keyword>
<evidence type="ECO:0000250" key="1">
    <source>
        <dbReference type="UniProtKB" id="Q8GYB8"/>
    </source>
</evidence>
<evidence type="ECO:0000250" key="2">
    <source>
        <dbReference type="UniProtKB" id="Q9FUP0"/>
    </source>
</evidence>
<evidence type="ECO:0000269" key="3">
    <source>
    </source>
</evidence>
<evidence type="ECO:0000269" key="4">
    <source>
    </source>
</evidence>
<evidence type="ECO:0000269" key="5">
    <source>
    </source>
</evidence>
<evidence type="ECO:0000269" key="6">
    <source>
    </source>
</evidence>
<evidence type="ECO:0000269" key="7">
    <source>
    </source>
</evidence>
<evidence type="ECO:0000269" key="8">
    <source>
    </source>
</evidence>
<evidence type="ECO:0000269" key="9">
    <source>
    </source>
</evidence>
<evidence type="ECO:0000269" key="10">
    <source>
    </source>
</evidence>
<evidence type="ECO:0000303" key="11">
    <source>
    </source>
</evidence>
<evidence type="ECO:0000305" key="12"/>
<evidence type="ECO:0000305" key="13">
    <source>
    </source>
</evidence>
<evidence type="ECO:0000312" key="14">
    <source>
        <dbReference type="Araport" id="AT1G76680"/>
    </source>
</evidence>
<evidence type="ECO:0000312" key="15">
    <source>
        <dbReference type="EMBL" id="AAF04448.1"/>
    </source>
</evidence>
<evidence type="ECO:0007744" key="16">
    <source>
        <dbReference type="PDB" id="1VJI"/>
    </source>
</evidence>
<evidence type="ECO:0007744" key="17">
    <source>
        <dbReference type="PDB" id="2Q3R"/>
    </source>
</evidence>
<evidence type="ECO:0007829" key="18">
    <source>
        <dbReference type="PDB" id="2Q3R"/>
    </source>
</evidence>